<gene>
    <name evidence="2" type="primary">mntP</name>
    <name type="synonym">yebN</name>
    <name type="ordered locus">b1821</name>
    <name type="ordered locus">JW5830</name>
</gene>
<dbReference type="EMBL" id="U00096">
    <property type="protein sequence ID" value="AAC74891.2"/>
    <property type="molecule type" value="Genomic_DNA"/>
</dbReference>
<dbReference type="EMBL" id="AP009048">
    <property type="protein sequence ID" value="BAA15632.2"/>
    <property type="molecule type" value="Genomic_DNA"/>
</dbReference>
<dbReference type="EMBL" id="X75948">
    <property type="status" value="NOT_ANNOTATED_CDS"/>
    <property type="molecule type" value="Genomic_DNA"/>
</dbReference>
<dbReference type="PIR" id="E64943">
    <property type="entry name" value="E64943"/>
</dbReference>
<dbReference type="RefSeq" id="NP_416335.4">
    <property type="nucleotide sequence ID" value="NC_000913.3"/>
</dbReference>
<dbReference type="RefSeq" id="WP_001296134.1">
    <property type="nucleotide sequence ID" value="NZ_STEB01000009.1"/>
</dbReference>
<dbReference type="BioGRID" id="4263026">
    <property type="interactions" value="7"/>
</dbReference>
<dbReference type="FunCoup" id="P76264">
    <property type="interactions" value="145"/>
</dbReference>
<dbReference type="STRING" id="511145.b1821"/>
<dbReference type="TCDB" id="2.A.107.1.1">
    <property type="family name" value="the mntp mn(2+) exporter (mntp) family"/>
</dbReference>
<dbReference type="jPOST" id="P76264"/>
<dbReference type="PaxDb" id="511145-b1821"/>
<dbReference type="EnsemblBacteria" id="AAC74891">
    <property type="protein sequence ID" value="AAC74891"/>
    <property type="gene ID" value="b1821"/>
</dbReference>
<dbReference type="GeneID" id="93776070"/>
<dbReference type="GeneID" id="946341"/>
<dbReference type="KEGG" id="ecj:JW5830"/>
<dbReference type="KEGG" id="eco:b1821"/>
<dbReference type="KEGG" id="ecoc:C3026_10375"/>
<dbReference type="PATRIC" id="fig|511145.12.peg.1898"/>
<dbReference type="EchoBASE" id="EB3768"/>
<dbReference type="eggNOG" id="COG1971">
    <property type="taxonomic scope" value="Bacteria"/>
</dbReference>
<dbReference type="HOGENOM" id="CLU_096410_0_0_6"/>
<dbReference type="InParanoid" id="P76264"/>
<dbReference type="OMA" id="WHFGLFQ"/>
<dbReference type="OrthoDB" id="9811590at2"/>
<dbReference type="PhylomeDB" id="P76264"/>
<dbReference type="BioCyc" id="EcoCyc:G6999-MONOMER"/>
<dbReference type="BioCyc" id="MetaCyc:G6999-MONOMER"/>
<dbReference type="PRO" id="PR:P76264"/>
<dbReference type="Proteomes" id="UP000000625">
    <property type="component" value="Chromosome"/>
</dbReference>
<dbReference type="GO" id="GO:0005886">
    <property type="term" value="C:plasma membrane"/>
    <property type="evidence" value="ECO:0000314"/>
    <property type="project" value="EcoCyc"/>
</dbReference>
<dbReference type="GO" id="GO:0005384">
    <property type="term" value="F:manganese ion transmembrane transporter activity"/>
    <property type="evidence" value="ECO:0000315"/>
    <property type="project" value="EcoCyc"/>
</dbReference>
<dbReference type="GO" id="GO:0030026">
    <property type="term" value="P:intracellular manganese ion homeostasis"/>
    <property type="evidence" value="ECO:0000314"/>
    <property type="project" value="EcoCyc"/>
</dbReference>
<dbReference type="GO" id="GO:0140048">
    <property type="term" value="P:manganese ion export across plasma membrane"/>
    <property type="evidence" value="ECO:0000315"/>
    <property type="project" value="EcoCyc"/>
</dbReference>
<dbReference type="HAMAP" id="MF_01521">
    <property type="entry name" value="MntP_pump"/>
    <property type="match status" value="1"/>
</dbReference>
<dbReference type="InterPro" id="IPR003810">
    <property type="entry name" value="Mntp/YtaF"/>
</dbReference>
<dbReference type="InterPro" id="IPR022929">
    <property type="entry name" value="Put_MntP"/>
</dbReference>
<dbReference type="NCBIfam" id="NF008546">
    <property type="entry name" value="PRK11469.1"/>
    <property type="match status" value="1"/>
</dbReference>
<dbReference type="PANTHER" id="PTHR35529">
    <property type="entry name" value="MANGANESE EFFLUX PUMP MNTP-RELATED"/>
    <property type="match status" value="1"/>
</dbReference>
<dbReference type="PANTHER" id="PTHR35529:SF1">
    <property type="entry name" value="MANGANESE EFFLUX PUMP MNTP-RELATED"/>
    <property type="match status" value="1"/>
</dbReference>
<dbReference type="Pfam" id="PF02659">
    <property type="entry name" value="Mntp"/>
    <property type="match status" value="1"/>
</dbReference>
<proteinExistence type="evidence at protein level"/>
<keyword id="KW-0997">Cell inner membrane</keyword>
<keyword id="KW-1003">Cell membrane</keyword>
<keyword id="KW-0406">Ion transport</keyword>
<keyword id="KW-0464">Manganese</keyword>
<keyword id="KW-0472">Membrane</keyword>
<keyword id="KW-1185">Reference proteome</keyword>
<keyword id="KW-0812">Transmembrane</keyword>
<keyword id="KW-1133">Transmembrane helix</keyword>
<keyword id="KW-0813">Transport</keyword>
<organism>
    <name type="scientific">Escherichia coli (strain K12)</name>
    <dbReference type="NCBI Taxonomy" id="83333"/>
    <lineage>
        <taxon>Bacteria</taxon>
        <taxon>Pseudomonadati</taxon>
        <taxon>Pseudomonadota</taxon>
        <taxon>Gammaproteobacteria</taxon>
        <taxon>Enterobacterales</taxon>
        <taxon>Enterobacteriaceae</taxon>
        <taxon>Escherichia</taxon>
    </lineage>
</organism>
<protein>
    <recommendedName>
        <fullName evidence="2">Probable manganese efflux pump MntP</fullName>
    </recommendedName>
</protein>
<feature type="chain" id="PRO_0000155649" description="Probable manganese efflux pump MntP">
    <location>
        <begin position="1"/>
        <end position="188"/>
    </location>
</feature>
<feature type="topological domain" description="Cytoplasmic" evidence="1">
    <location>
        <begin position="1"/>
        <end position="2"/>
    </location>
</feature>
<feature type="transmembrane region" description="Helical" evidence="2">
    <location>
        <begin position="3"/>
        <end position="23"/>
    </location>
</feature>
<feature type="topological domain" description="Periplasmic" evidence="1">
    <location>
        <begin position="24"/>
        <end position="65"/>
    </location>
</feature>
<feature type="transmembrane region" description="Helical" evidence="2">
    <location>
        <begin position="66"/>
        <end position="86"/>
    </location>
</feature>
<feature type="topological domain" description="Cytoplasmic" evidence="1">
    <location>
        <begin position="87"/>
        <end position="105"/>
    </location>
</feature>
<feature type="transmembrane region" description="Helical" evidence="2">
    <location>
        <begin position="106"/>
        <end position="128"/>
    </location>
</feature>
<feature type="topological domain" description="Periplasmic" evidence="1">
    <location>
        <begin position="129"/>
        <end position="142"/>
    </location>
</feature>
<feature type="transmembrane region" description="Helical" evidence="2">
    <location>
        <begin position="143"/>
        <end position="163"/>
    </location>
</feature>
<feature type="topological domain" description="Cytoplasmic" evidence="1">
    <location>
        <begin position="164"/>
        <end position="167"/>
    </location>
</feature>
<feature type="transmembrane region" description="Helical" evidence="2">
    <location>
        <begin position="168"/>
        <end position="187"/>
    </location>
</feature>
<feature type="topological domain" description="Periplasmic" evidence="1">
    <location>
        <position position="188"/>
    </location>
</feature>
<accession>P76264</accession>
<accession>O07974</accession>
<evidence type="ECO:0000255" key="1"/>
<evidence type="ECO:0000255" key="2">
    <source>
        <dbReference type="HAMAP-Rule" id="MF_01521"/>
    </source>
</evidence>
<evidence type="ECO:0000269" key="3">
    <source>
    </source>
</evidence>
<name>MNTP_ECOLI</name>
<comment type="function">
    <text evidence="2 3">Probably functions as a manganese efflux pump.</text>
</comment>
<comment type="subcellular location">
    <subcellularLocation>
        <location>Cell inner membrane</location>
        <topology>Multi-pass membrane protein</topology>
    </subcellularLocation>
</comment>
<comment type="induction">
    <text evidence="3">Up-regulated by MntR in response to manganese.</text>
</comment>
<comment type="disruption phenotype">
    <text evidence="3">Deletion causes manganese sensitivity and leads to increased intracellular manganese levels.</text>
</comment>
<comment type="similarity">
    <text evidence="2">Belongs to the MntP (TC 9.B.29) family.</text>
</comment>
<sequence>MNITATVLLAFGMSMDAFAASIGKGATLHKPKFSEALRTGLIFGAVETLTPLIGWGMGMLASRFVLEWNHWIAFVLLIFLGGRMIIEGFRGADDEDEEPRRRHGFWLLVTTAIATSLDAMAVGVGLAFLQVNIIATALAIGCATLIMSTLGMMVGRFIGSIIGKKAEILGGLVLIGIGVQILWTHFHG</sequence>
<reference key="1">
    <citation type="journal article" date="1996" name="DNA Res.">
        <title>A 460-kb DNA sequence of the Escherichia coli K-12 genome corresponding to the 40.1-50.0 min region on the linkage map.</title>
        <authorList>
            <person name="Itoh T."/>
            <person name="Aiba H."/>
            <person name="Baba T."/>
            <person name="Fujita K."/>
            <person name="Hayashi K."/>
            <person name="Inada T."/>
            <person name="Isono K."/>
            <person name="Kasai H."/>
            <person name="Kimura S."/>
            <person name="Kitakawa M."/>
            <person name="Kitagawa M."/>
            <person name="Makino K."/>
            <person name="Miki T."/>
            <person name="Mizobuchi K."/>
            <person name="Mori H."/>
            <person name="Mori T."/>
            <person name="Motomura K."/>
            <person name="Nakade S."/>
            <person name="Nakamura Y."/>
            <person name="Nashimoto H."/>
            <person name="Nishio Y."/>
            <person name="Oshima T."/>
            <person name="Saito N."/>
            <person name="Sampei G."/>
            <person name="Seki Y."/>
            <person name="Sivasundaram S."/>
            <person name="Tagami H."/>
            <person name="Takeda J."/>
            <person name="Takemoto K."/>
            <person name="Wada C."/>
            <person name="Yamamoto Y."/>
            <person name="Horiuchi T."/>
        </authorList>
    </citation>
    <scope>NUCLEOTIDE SEQUENCE [LARGE SCALE GENOMIC DNA]</scope>
    <source>
        <strain>K12 / W3110 / ATCC 27325 / DSM 5911</strain>
    </source>
</reference>
<reference key="2">
    <citation type="journal article" date="1997" name="Science">
        <title>The complete genome sequence of Escherichia coli K-12.</title>
        <authorList>
            <person name="Blattner F.R."/>
            <person name="Plunkett G. III"/>
            <person name="Bloch C.A."/>
            <person name="Perna N.T."/>
            <person name="Burland V."/>
            <person name="Riley M."/>
            <person name="Collado-Vides J."/>
            <person name="Glasner J.D."/>
            <person name="Rode C.K."/>
            <person name="Mayhew G.F."/>
            <person name="Gregor J."/>
            <person name="Davis N.W."/>
            <person name="Kirkpatrick H.A."/>
            <person name="Goeden M.A."/>
            <person name="Rose D.J."/>
            <person name="Mau B."/>
            <person name="Shao Y."/>
        </authorList>
    </citation>
    <scope>NUCLEOTIDE SEQUENCE [LARGE SCALE GENOMIC DNA]</scope>
    <source>
        <strain>K12 / MG1655 / ATCC 47076</strain>
    </source>
</reference>
<reference key="3">
    <citation type="journal article" date="2006" name="Mol. Syst. Biol.">
        <title>Highly accurate genome sequences of Escherichia coli K-12 strains MG1655 and W3110.</title>
        <authorList>
            <person name="Hayashi K."/>
            <person name="Morooka N."/>
            <person name="Yamamoto Y."/>
            <person name="Fujita K."/>
            <person name="Isono K."/>
            <person name="Choi S."/>
            <person name="Ohtsubo E."/>
            <person name="Baba T."/>
            <person name="Wanner B.L."/>
            <person name="Mori H."/>
            <person name="Horiuchi T."/>
        </authorList>
    </citation>
    <scope>NUCLEOTIDE SEQUENCE [LARGE SCALE GENOMIC DNA]</scope>
    <source>
        <strain>K12 / W3110 / ATCC 27325 / DSM 5911</strain>
    </source>
</reference>
<reference key="4">
    <citation type="journal article" date="1994" name="J. Mol. Biol.">
        <title>Fur regulon in Gram-negative bacteria. Identification and characterization of new iron-regulated Escherichia coli genes by a fur titration assay.</title>
        <authorList>
            <person name="Stojiljkovic I."/>
            <person name="Baumler A.J."/>
            <person name="Hantke K."/>
        </authorList>
    </citation>
    <scope>NUCLEOTIDE SEQUENCE [GENOMIC DNA] OF 1-53</scope>
</reference>
<reference key="5">
    <citation type="journal article" date="2005" name="Science">
        <title>Global topology analysis of the Escherichia coli inner membrane proteome.</title>
        <authorList>
            <person name="Daley D.O."/>
            <person name="Rapp M."/>
            <person name="Granseth E."/>
            <person name="Melen K."/>
            <person name="Drew D."/>
            <person name="von Heijne G."/>
        </authorList>
    </citation>
    <scope>TOPOLOGY [LARGE SCALE ANALYSIS]</scope>
    <source>
        <strain>K12 / MG1655 / ATCC 47076</strain>
    </source>
</reference>
<reference key="6">
    <citation type="journal article" date="2011" name="J. Bacteriol.">
        <title>The Escherichia coli MntR miniregulon includes genes encoding a small protein and an efflux pump required for manganese homeostasis.</title>
        <authorList>
            <person name="Waters L.S."/>
            <person name="Sandoval M."/>
            <person name="Storz G."/>
        </authorList>
    </citation>
    <scope>FUNCTION IN MANGANESE HOMEOSTASIS</scope>
    <scope>INDUCTION</scope>
    <scope>DISRUPTION PHENOTYPE</scope>
    <scope>GENE NAME</scope>
</reference>